<evidence type="ECO:0000250" key="1"/>
<evidence type="ECO:0000255" key="2">
    <source>
        <dbReference type="PROSITE-ProRule" id="PRU00108"/>
    </source>
</evidence>
<evidence type="ECO:0000256" key="3">
    <source>
        <dbReference type="SAM" id="MobiDB-lite"/>
    </source>
</evidence>
<evidence type="ECO:0000269" key="4">
    <source>
    </source>
</evidence>
<evidence type="ECO:0000305" key="5"/>
<organism>
    <name type="scientific">Arabidopsis thaliana</name>
    <name type="common">Mouse-ear cress</name>
    <dbReference type="NCBI Taxonomy" id="3702"/>
    <lineage>
        <taxon>Eukaryota</taxon>
        <taxon>Viridiplantae</taxon>
        <taxon>Streptophyta</taxon>
        <taxon>Embryophyta</taxon>
        <taxon>Tracheophyta</taxon>
        <taxon>Spermatophyta</taxon>
        <taxon>Magnoliopsida</taxon>
        <taxon>eudicotyledons</taxon>
        <taxon>Gunneridae</taxon>
        <taxon>Pentapetalae</taxon>
        <taxon>rosids</taxon>
        <taxon>malvids</taxon>
        <taxon>Brassicales</taxon>
        <taxon>Brassicaceae</taxon>
        <taxon>Camelineae</taxon>
        <taxon>Arabidopsis</taxon>
    </lineage>
</organism>
<name>HAT1_ARATH</name>
<reference key="1">
    <citation type="journal article" date="1994" name="Proc. Natl. Acad. Sci. U.S.A.">
        <title>Structure of homeobox-leucine zipper genes suggests a model for the evolution of gene families.</title>
        <authorList>
            <person name="Schena M."/>
            <person name="Davis R.W."/>
        </authorList>
    </citation>
    <scope>NUCLEOTIDE SEQUENCE [GENOMIC DNA / MRNA]</scope>
    <source>
        <strain>cv. Columbia</strain>
    </source>
</reference>
<reference key="2">
    <citation type="submission" date="2002-04" db="EMBL/GenBank/DDBJ databases">
        <title>Nucleotide sequence of the Arabidopsis HAT1 mRNA, encoding an HD-Zip II protein related to ATHB-2.</title>
        <authorList>
            <person name="Sessa G."/>
            <person name="Carabelli M."/>
            <person name="Ciarbelli A.R."/>
            <person name="Sessa G."/>
            <person name="Steindler C."/>
            <person name="Ruberti I."/>
        </authorList>
    </citation>
    <scope>NUCLEOTIDE SEQUENCE [MRNA]</scope>
    <source>
        <strain>cv. Columbia</strain>
    </source>
</reference>
<reference key="3">
    <citation type="journal article" date="1998" name="Nature">
        <title>Analysis of 1.9 Mb of contiguous sequence from chromosome 4 of Arabidopsis thaliana.</title>
        <authorList>
            <person name="Bevan M."/>
            <person name="Bancroft I."/>
            <person name="Bent E."/>
            <person name="Love K."/>
            <person name="Goodman H.M."/>
            <person name="Dean C."/>
            <person name="Bergkamp R."/>
            <person name="Dirkse W."/>
            <person name="van Staveren M."/>
            <person name="Stiekema W."/>
            <person name="Drost L."/>
            <person name="Ridley P."/>
            <person name="Hudson S.-A."/>
            <person name="Patel K."/>
            <person name="Murphy G."/>
            <person name="Piffanelli P."/>
            <person name="Wedler H."/>
            <person name="Wedler E."/>
            <person name="Wambutt R."/>
            <person name="Weitzenegger T."/>
            <person name="Pohl T."/>
            <person name="Terryn N."/>
            <person name="Gielen J."/>
            <person name="Villarroel R."/>
            <person name="De Clercq R."/>
            <person name="van Montagu M."/>
            <person name="Lecharny A."/>
            <person name="Aubourg S."/>
            <person name="Gy I."/>
            <person name="Kreis M."/>
            <person name="Lao N."/>
            <person name="Kavanagh T."/>
            <person name="Hempel S."/>
            <person name="Kotter P."/>
            <person name="Entian K.-D."/>
            <person name="Rieger M."/>
            <person name="Schaefer M."/>
            <person name="Funk B."/>
            <person name="Mueller-Auer S."/>
            <person name="Silvey M."/>
            <person name="James R."/>
            <person name="Monfort A."/>
            <person name="Pons A."/>
            <person name="Puigdomenech P."/>
            <person name="Douka A."/>
            <person name="Voukelatou E."/>
            <person name="Milioni D."/>
            <person name="Hatzopoulos P."/>
            <person name="Piravandi E."/>
            <person name="Obermaier B."/>
            <person name="Hilbert H."/>
            <person name="Duesterhoeft A."/>
            <person name="Moores T."/>
            <person name="Jones J.D.G."/>
            <person name="Eneva T."/>
            <person name="Palme K."/>
            <person name="Benes V."/>
            <person name="Rechmann S."/>
            <person name="Ansorge W."/>
            <person name="Cooke R."/>
            <person name="Berger C."/>
            <person name="Delseny M."/>
            <person name="Voet M."/>
            <person name="Volckaert G."/>
            <person name="Mewes H.-W."/>
            <person name="Klosterman S."/>
            <person name="Schueller C."/>
            <person name="Chalwatzis N."/>
        </authorList>
    </citation>
    <scope>NUCLEOTIDE SEQUENCE [LARGE SCALE GENOMIC DNA]</scope>
    <source>
        <strain>cv. Columbia</strain>
    </source>
</reference>
<reference key="4">
    <citation type="journal article" date="1999" name="Nature">
        <title>Sequence and analysis of chromosome 4 of the plant Arabidopsis thaliana.</title>
        <authorList>
            <person name="Mayer K.F.X."/>
            <person name="Schueller C."/>
            <person name="Wambutt R."/>
            <person name="Murphy G."/>
            <person name="Volckaert G."/>
            <person name="Pohl T."/>
            <person name="Duesterhoeft A."/>
            <person name="Stiekema W."/>
            <person name="Entian K.-D."/>
            <person name="Terryn N."/>
            <person name="Harris B."/>
            <person name="Ansorge W."/>
            <person name="Brandt P."/>
            <person name="Grivell L.A."/>
            <person name="Rieger M."/>
            <person name="Weichselgartner M."/>
            <person name="de Simone V."/>
            <person name="Obermaier B."/>
            <person name="Mache R."/>
            <person name="Mueller M."/>
            <person name="Kreis M."/>
            <person name="Delseny M."/>
            <person name="Puigdomenech P."/>
            <person name="Watson M."/>
            <person name="Schmidtheini T."/>
            <person name="Reichert B."/>
            <person name="Portetelle D."/>
            <person name="Perez-Alonso M."/>
            <person name="Boutry M."/>
            <person name="Bancroft I."/>
            <person name="Vos P."/>
            <person name="Hoheisel J."/>
            <person name="Zimmermann W."/>
            <person name="Wedler H."/>
            <person name="Ridley P."/>
            <person name="Langham S.-A."/>
            <person name="McCullagh B."/>
            <person name="Bilham L."/>
            <person name="Robben J."/>
            <person name="van der Schueren J."/>
            <person name="Grymonprez B."/>
            <person name="Chuang Y.-J."/>
            <person name="Vandenbussche F."/>
            <person name="Braeken M."/>
            <person name="Weltjens I."/>
            <person name="Voet M."/>
            <person name="Bastiaens I."/>
            <person name="Aert R."/>
            <person name="Defoor E."/>
            <person name="Weitzenegger T."/>
            <person name="Bothe G."/>
            <person name="Ramsperger U."/>
            <person name="Hilbert H."/>
            <person name="Braun M."/>
            <person name="Holzer E."/>
            <person name="Brandt A."/>
            <person name="Peters S."/>
            <person name="van Staveren M."/>
            <person name="Dirkse W."/>
            <person name="Mooijman P."/>
            <person name="Klein Lankhorst R."/>
            <person name="Rose M."/>
            <person name="Hauf J."/>
            <person name="Koetter P."/>
            <person name="Berneiser S."/>
            <person name="Hempel S."/>
            <person name="Feldpausch M."/>
            <person name="Lamberth S."/>
            <person name="Van den Daele H."/>
            <person name="De Keyser A."/>
            <person name="Buysshaert C."/>
            <person name="Gielen J."/>
            <person name="Villarroel R."/>
            <person name="De Clercq R."/>
            <person name="van Montagu M."/>
            <person name="Rogers J."/>
            <person name="Cronin A."/>
            <person name="Quail M.A."/>
            <person name="Bray-Allen S."/>
            <person name="Clark L."/>
            <person name="Doggett J."/>
            <person name="Hall S."/>
            <person name="Kay M."/>
            <person name="Lennard N."/>
            <person name="McLay K."/>
            <person name="Mayes R."/>
            <person name="Pettett A."/>
            <person name="Rajandream M.A."/>
            <person name="Lyne M."/>
            <person name="Benes V."/>
            <person name="Rechmann S."/>
            <person name="Borkova D."/>
            <person name="Bloecker H."/>
            <person name="Scharfe M."/>
            <person name="Grimm M."/>
            <person name="Loehnert T.-H."/>
            <person name="Dose S."/>
            <person name="de Haan M."/>
            <person name="Maarse A.C."/>
            <person name="Schaefer M."/>
            <person name="Mueller-Auer S."/>
            <person name="Gabel C."/>
            <person name="Fuchs M."/>
            <person name="Fartmann B."/>
            <person name="Granderath K."/>
            <person name="Dauner D."/>
            <person name="Herzl A."/>
            <person name="Neumann S."/>
            <person name="Argiriou A."/>
            <person name="Vitale D."/>
            <person name="Liguori R."/>
            <person name="Piravandi E."/>
            <person name="Massenet O."/>
            <person name="Quigley F."/>
            <person name="Clabauld G."/>
            <person name="Muendlein A."/>
            <person name="Felber R."/>
            <person name="Schnabl S."/>
            <person name="Hiller R."/>
            <person name="Schmidt W."/>
            <person name="Lecharny A."/>
            <person name="Aubourg S."/>
            <person name="Chefdor F."/>
            <person name="Cooke R."/>
            <person name="Berger C."/>
            <person name="Monfort A."/>
            <person name="Casacuberta E."/>
            <person name="Gibbons T."/>
            <person name="Weber N."/>
            <person name="Vandenbol M."/>
            <person name="Bargues M."/>
            <person name="Terol J."/>
            <person name="Torres A."/>
            <person name="Perez-Perez A."/>
            <person name="Purnelle B."/>
            <person name="Bent E."/>
            <person name="Johnson S."/>
            <person name="Tacon D."/>
            <person name="Jesse T."/>
            <person name="Heijnen L."/>
            <person name="Schwarz S."/>
            <person name="Scholler P."/>
            <person name="Heber S."/>
            <person name="Francs P."/>
            <person name="Bielke C."/>
            <person name="Frishman D."/>
            <person name="Haase D."/>
            <person name="Lemcke K."/>
            <person name="Mewes H.-W."/>
            <person name="Stocker S."/>
            <person name="Zaccaria P."/>
            <person name="Bevan M."/>
            <person name="Wilson R.K."/>
            <person name="de la Bastide M."/>
            <person name="Habermann K."/>
            <person name="Parnell L."/>
            <person name="Dedhia N."/>
            <person name="Gnoj L."/>
            <person name="Schutz K."/>
            <person name="Huang E."/>
            <person name="Spiegel L."/>
            <person name="Sekhon M."/>
            <person name="Murray J."/>
            <person name="Sheet P."/>
            <person name="Cordes M."/>
            <person name="Abu-Threideh J."/>
            <person name="Stoneking T."/>
            <person name="Kalicki J."/>
            <person name="Graves T."/>
            <person name="Harmon G."/>
            <person name="Edwards J."/>
            <person name="Latreille P."/>
            <person name="Courtney L."/>
            <person name="Cloud J."/>
            <person name="Abbott A."/>
            <person name="Scott K."/>
            <person name="Johnson D."/>
            <person name="Minx P."/>
            <person name="Bentley D."/>
            <person name="Fulton B."/>
            <person name="Miller N."/>
            <person name="Greco T."/>
            <person name="Kemp K."/>
            <person name="Kramer J."/>
            <person name="Fulton L."/>
            <person name="Mardis E."/>
            <person name="Dante M."/>
            <person name="Pepin K."/>
            <person name="Hillier L.W."/>
            <person name="Nelson J."/>
            <person name="Spieth J."/>
            <person name="Ryan E."/>
            <person name="Andrews S."/>
            <person name="Geisel C."/>
            <person name="Layman D."/>
            <person name="Du H."/>
            <person name="Ali J."/>
            <person name="Berghoff A."/>
            <person name="Jones K."/>
            <person name="Drone K."/>
            <person name="Cotton M."/>
            <person name="Joshu C."/>
            <person name="Antonoiu B."/>
            <person name="Zidanic M."/>
            <person name="Strong C."/>
            <person name="Sun H."/>
            <person name="Lamar B."/>
            <person name="Yordan C."/>
            <person name="Ma P."/>
            <person name="Zhong J."/>
            <person name="Preston R."/>
            <person name="Vil D."/>
            <person name="Shekher M."/>
            <person name="Matero A."/>
            <person name="Shah R."/>
            <person name="Swaby I.K."/>
            <person name="O'Shaughnessy A."/>
            <person name="Rodriguez M."/>
            <person name="Hoffman J."/>
            <person name="Till S."/>
            <person name="Granat S."/>
            <person name="Shohdy N."/>
            <person name="Hasegawa A."/>
            <person name="Hameed A."/>
            <person name="Lodhi M."/>
            <person name="Johnson A."/>
            <person name="Chen E."/>
            <person name="Marra M.A."/>
            <person name="Martienssen R."/>
            <person name="McCombie W.R."/>
        </authorList>
    </citation>
    <scope>NUCLEOTIDE SEQUENCE [LARGE SCALE GENOMIC DNA]</scope>
    <source>
        <strain>cv. Columbia</strain>
    </source>
</reference>
<reference key="5">
    <citation type="journal article" date="2017" name="Plant J.">
        <title>Araport11: a complete reannotation of the Arabidopsis thaliana reference genome.</title>
        <authorList>
            <person name="Cheng C.Y."/>
            <person name="Krishnakumar V."/>
            <person name="Chan A.P."/>
            <person name="Thibaud-Nissen F."/>
            <person name="Schobel S."/>
            <person name="Town C.D."/>
        </authorList>
    </citation>
    <scope>GENOME REANNOTATION</scope>
    <source>
        <strain>cv. Columbia</strain>
    </source>
</reference>
<reference key="6">
    <citation type="journal article" date="2003" name="Science">
        <title>Empirical analysis of transcriptional activity in the Arabidopsis genome.</title>
        <authorList>
            <person name="Yamada K."/>
            <person name="Lim J."/>
            <person name="Dale J.M."/>
            <person name="Chen H."/>
            <person name="Shinn P."/>
            <person name="Palm C.J."/>
            <person name="Southwick A.M."/>
            <person name="Wu H.C."/>
            <person name="Kim C.J."/>
            <person name="Nguyen M."/>
            <person name="Pham P.K."/>
            <person name="Cheuk R.F."/>
            <person name="Karlin-Newmann G."/>
            <person name="Liu S.X."/>
            <person name="Lam B."/>
            <person name="Sakano H."/>
            <person name="Wu T."/>
            <person name="Yu G."/>
            <person name="Miranda M."/>
            <person name="Quach H.L."/>
            <person name="Tripp M."/>
            <person name="Chang C.H."/>
            <person name="Lee J.M."/>
            <person name="Toriumi M.J."/>
            <person name="Chan M.M."/>
            <person name="Tang C.C."/>
            <person name="Onodera C.S."/>
            <person name="Deng J.M."/>
            <person name="Akiyama K."/>
            <person name="Ansari Y."/>
            <person name="Arakawa T."/>
            <person name="Banh J."/>
            <person name="Banno F."/>
            <person name="Bowser L."/>
            <person name="Brooks S.Y."/>
            <person name="Carninci P."/>
            <person name="Chao Q."/>
            <person name="Choy N."/>
            <person name="Enju A."/>
            <person name="Goldsmith A.D."/>
            <person name="Gurjal M."/>
            <person name="Hansen N.F."/>
            <person name="Hayashizaki Y."/>
            <person name="Johnson-Hopson C."/>
            <person name="Hsuan V.W."/>
            <person name="Iida K."/>
            <person name="Karnes M."/>
            <person name="Khan S."/>
            <person name="Koesema E."/>
            <person name="Ishida J."/>
            <person name="Jiang P.X."/>
            <person name="Jones T."/>
            <person name="Kawai J."/>
            <person name="Kamiya A."/>
            <person name="Meyers C."/>
            <person name="Nakajima M."/>
            <person name="Narusaka M."/>
            <person name="Seki M."/>
            <person name="Sakurai T."/>
            <person name="Satou M."/>
            <person name="Tamse R."/>
            <person name="Vaysberg M."/>
            <person name="Wallender E.K."/>
            <person name="Wong C."/>
            <person name="Yamamura Y."/>
            <person name="Yuan S."/>
            <person name="Shinozaki K."/>
            <person name="Davis R.W."/>
            <person name="Theologis A."/>
            <person name="Ecker J.R."/>
        </authorList>
    </citation>
    <scope>NUCLEOTIDE SEQUENCE [LARGE SCALE MRNA]</scope>
    <source>
        <strain>cv. Columbia</strain>
    </source>
</reference>
<reference key="7">
    <citation type="submission" date="2002-03" db="EMBL/GenBank/DDBJ databases">
        <title>Full-length cDNA from Arabidopsis thaliana.</title>
        <authorList>
            <person name="Brover V.V."/>
            <person name="Troukhan M.E."/>
            <person name="Alexandrov N.A."/>
            <person name="Lu Y.-P."/>
            <person name="Flavell R.B."/>
            <person name="Feldmann K.A."/>
        </authorList>
    </citation>
    <scope>NUCLEOTIDE SEQUENCE [LARGE SCALE MRNA]</scope>
</reference>
<reference key="8">
    <citation type="submission" date="2006-07" db="EMBL/GenBank/DDBJ databases">
        <title>Large-scale analysis of RIKEN Arabidopsis full-length (RAFL) cDNAs.</title>
        <authorList>
            <person name="Totoki Y."/>
            <person name="Seki M."/>
            <person name="Ishida J."/>
            <person name="Nakajima M."/>
            <person name="Enju A."/>
            <person name="Kamiya A."/>
            <person name="Narusaka M."/>
            <person name="Shin-i T."/>
            <person name="Nakagawa M."/>
            <person name="Sakamoto N."/>
            <person name="Oishi K."/>
            <person name="Kohara Y."/>
            <person name="Kobayashi M."/>
            <person name="Toyoda A."/>
            <person name="Sakaki Y."/>
            <person name="Sakurai T."/>
            <person name="Iida K."/>
            <person name="Akiyama K."/>
            <person name="Satou M."/>
            <person name="Toyoda T."/>
            <person name="Konagaya A."/>
            <person name="Carninci P."/>
            <person name="Kawai J."/>
            <person name="Hayashizaki Y."/>
            <person name="Shinozaki K."/>
        </authorList>
    </citation>
    <scope>NUCLEOTIDE SEQUENCE [LARGE SCALE MRNA]</scope>
    <source>
        <strain>cv. Columbia</strain>
    </source>
</reference>
<reference key="9">
    <citation type="journal article" date="2005" name="Plant Physiol.">
        <title>Homeodomain leucine zipper class I genes in Arabidopsis. Expression patterns and phylogenetic relationships.</title>
        <authorList>
            <person name="Henriksson E."/>
            <person name="Olsson A.S.B."/>
            <person name="Johannesson H."/>
            <person name="Johansson H."/>
            <person name="Hanson J."/>
            <person name="Engstroem P."/>
            <person name="Soederman E."/>
        </authorList>
    </citation>
    <scope>GENE FAMILY</scope>
</reference>
<reference key="10">
    <citation type="journal article" date="2016" name="Plant J.">
        <title>Altered expression of the bZIP transcription factor DRINK ME affects growth and reproductive development in Arabidopsis thaliana.</title>
        <authorList>
            <person name="Lozano-Sotomayor P."/>
            <person name="Chavez Montes R.A."/>
            <person name="Silvestre-Vano M."/>
            <person name="Herrera-Ubaldo H."/>
            <person name="Greco R."/>
            <person name="Pablo-Villa J."/>
            <person name="Galliani B.M."/>
            <person name="Diaz-Ramirez D."/>
            <person name="Weemen M."/>
            <person name="Boutilier K."/>
            <person name="Pereira A."/>
            <person name="Colombo L."/>
            <person name="Madueno F."/>
            <person name="Marsch-Martinez N."/>
            <person name="de Folter S."/>
        </authorList>
    </citation>
    <scope>INTERACTION WITH BZIP30</scope>
</reference>
<gene>
    <name type="primary">HAT1</name>
    <name type="ordered locus">At4g17460</name>
    <name type="ORF">dl4765w</name>
    <name type="ORF">FCAALL.65</name>
</gene>
<protein>
    <recommendedName>
        <fullName>Homeobox-leucine zipper protein HAT1</fullName>
    </recommendedName>
    <alternativeName>
        <fullName>Homeodomain-leucine zipper protein HAT1</fullName>
        <shortName>HD-ZIP protein 1</shortName>
    </alternativeName>
</protein>
<sequence length="282" mass="31555">MMMGKEDLGLSLSLGFAQNHPLQLNLKPTSSPMSNLQMFPWNQTLVSSSDQQKQQFLRKIDVNSLPTTVDLEEETGVSSPNSTISSTVSGKRRSTEREGTSGGGCGDDLDITLDRSSSRGTSDEEEDYGGETCRKKLRLSKDQSAVLEDTFKEHNTLNPKQKLALAKKLGLTARQVEVWFQNRRARTKLKQTEVDCEYLKRCVEKLTEENRRLEKEAAELRALKLSPRLYGQMSPPTTLLMCPSCERVAGPSSSNHNQRSVSLSPWLQMAHGSTFDVMRPRS</sequence>
<feature type="chain" id="PRO_0000048898" description="Homeobox-leucine zipper protein HAT1">
    <location>
        <begin position="1"/>
        <end position="282"/>
    </location>
</feature>
<feature type="DNA-binding region" description="Homeobox" evidence="2">
    <location>
        <begin position="132"/>
        <end position="191"/>
    </location>
</feature>
<feature type="region of interest" description="Disordered" evidence="3">
    <location>
        <begin position="71"/>
        <end position="134"/>
    </location>
</feature>
<feature type="region of interest" description="Leucine-zipper">
    <location>
        <begin position="199"/>
        <end position="220"/>
    </location>
</feature>
<feature type="compositionally biased region" description="Low complexity" evidence="3">
    <location>
        <begin position="76"/>
        <end position="89"/>
    </location>
</feature>
<feature type="sequence conflict" description="In Ref. 7; AAM64872." evidence="5" ref="7">
    <original>T</original>
    <variation>I</variation>
    <location>
        <position position="75"/>
    </location>
</feature>
<dbReference type="EMBL" id="U09332">
    <property type="protein sequence ID" value="AAA56898.1"/>
    <property type="molecule type" value="mRNA"/>
</dbReference>
<dbReference type="EMBL" id="U09333">
    <property type="protein sequence ID" value="AAA56899.1"/>
    <property type="molecule type" value="Genomic_DNA"/>
</dbReference>
<dbReference type="EMBL" id="AJ441252">
    <property type="protein sequence ID" value="CAD29651.1"/>
    <property type="molecule type" value="mRNA"/>
</dbReference>
<dbReference type="EMBL" id="Z97343">
    <property type="protein sequence ID" value="CAB10527.1"/>
    <property type="molecule type" value="Genomic_DNA"/>
</dbReference>
<dbReference type="EMBL" id="AL161546">
    <property type="protein sequence ID" value="CAB78749.1"/>
    <property type="molecule type" value="Genomic_DNA"/>
</dbReference>
<dbReference type="EMBL" id="CP002687">
    <property type="protein sequence ID" value="AEE83894.1"/>
    <property type="molecule type" value="Genomic_DNA"/>
</dbReference>
<dbReference type="EMBL" id="BT005756">
    <property type="protein sequence ID" value="AAO64161.1"/>
    <property type="molecule type" value="mRNA"/>
</dbReference>
<dbReference type="EMBL" id="BT006112">
    <property type="protein sequence ID" value="AAP04097.1"/>
    <property type="molecule type" value="mRNA"/>
</dbReference>
<dbReference type="EMBL" id="AY087322">
    <property type="protein sequence ID" value="AAM64872.1"/>
    <property type="molecule type" value="mRNA"/>
</dbReference>
<dbReference type="EMBL" id="AK228587">
    <property type="protein sequence ID" value="BAF00502.1"/>
    <property type="molecule type" value="mRNA"/>
</dbReference>
<dbReference type="PIR" id="B71444">
    <property type="entry name" value="B71444"/>
</dbReference>
<dbReference type="RefSeq" id="NP_193476.1">
    <property type="nucleotide sequence ID" value="NM_117849.4"/>
</dbReference>
<dbReference type="SMR" id="P46600"/>
<dbReference type="BioGRID" id="12750">
    <property type="interactions" value="23"/>
</dbReference>
<dbReference type="FunCoup" id="P46600">
    <property type="interactions" value="25"/>
</dbReference>
<dbReference type="IntAct" id="P46600">
    <property type="interactions" value="31"/>
</dbReference>
<dbReference type="STRING" id="3702.P46600"/>
<dbReference type="PaxDb" id="3702-AT4G17460.1"/>
<dbReference type="ProteomicsDB" id="230127"/>
<dbReference type="EnsemblPlants" id="AT4G17460.1">
    <property type="protein sequence ID" value="AT4G17460.1"/>
    <property type="gene ID" value="AT4G17460"/>
</dbReference>
<dbReference type="GeneID" id="827457"/>
<dbReference type="Gramene" id="AT4G17460.1">
    <property type="protein sequence ID" value="AT4G17460.1"/>
    <property type="gene ID" value="AT4G17460"/>
</dbReference>
<dbReference type="KEGG" id="ath:AT4G17460"/>
<dbReference type="Araport" id="AT4G17460"/>
<dbReference type="TAIR" id="AT4G17460">
    <property type="gene designation" value="HAT1"/>
</dbReference>
<dbReference type="eggNOG" id="KOG0483">
    <property type="taxonomic scope" value="Eukaryota"/>
</dbReference>
<dbReference type="HOGENOM" id="CLU_049516_2_1_1"/>
<dbReference type="InParanoid" id="P46600"/>
<dbReference type="OMA" id="PRLYGQM"/>
<dbReference type="PhylomeDB" id="P46600"/>
<dbReference type="PRO" id="PR:P46600"/>
<dbReference type="Proteomes" id="UP000006548">
    <property type="component" value="Chromosome 4"/>
</dbReference>
<dbReference type="ExpressionAtlas" id="P46600">
    <property type="expression patterns" value="baseline and differential"/>
</dbReference>
<dbReference type="GO" id="GO:0005634">
    <property type="term" value="C:nucleus"/>
    <property type="evidence" value="ECO:0000314"/>
    <property type="project" value="TAIR"/>
</dbReference>
<dbReference type="GO" id="GO:0003700">
    <property type="term" value="F:DNA-binding transcription factor activity"/>
    <property type="evidence" value="ECO:0000250"/>
    <property type="project" value="TAIR"/>
</dbReference>
<dbReference type="GO" id="GO:0000981">
    <property type="term" value="F:DNA-binding transcription factor activity, RNA polymerase II-specific"/>
    <property type="evidence" value="ECO:0007669"/>
    <property type="project" value="InterPro"/>
</dbReference>
<dbReference type="GO" id="GO:0000976">
    <property type="term" value="F:transcription cis-regulatory region binding"/>
    <property type="evidence" value="ECO:0000353"/>
    <property type="project" value="TAIR"/>
</dbReference>
<dbReference type="GO" id="GO:0003006">
    <property type="term" value="P:developmental process involved in reproduction"/>
    <property type="evidence" value="ECO:0000316"/>
    <property type="project" value="TAIR"/>
</dbReference>
<dbReference type="GO" id="GO:0010582">
    <property type="term" value="P:floral meristem determinacy"/>
    <property type="evidence" value="ECO:0000316"/>
    <property type="project" value="TAIR"/>
</dbReference>
<dbReference type="GO" id="GO:0080127">
    <property type="term" value="P:fruit septum development"/>
    <property type="evidence" value="ECO:0000316"/>
    <property type="project" value="TAIR"/>
</dbReference>
<dbReference type="GO" id="GO:0048467">
    <property type="term" value="P:gynoecium development"/>
    <property type="evidence" value="ECO:0000316"/>
    <property type="project" value="TAIR"/>
</dbReference>
<dbReference type="CDD" id="cd00086">
    <property type="entry name" value="homeodomain"/>
    <property type="match status" value="1"/>
</dbReference>
<dbReference type="FunFam" id="1.10.10.60:FF:000192">
    <property type="entry name" value="Homeobox-leucine zipper protein HAT22"/>
    <property type="match status" value="1"/>
</dbReference>
<dbReference type="Gene3D" id="1.10.10.60">
    <property type="entry name" value="Homeodomain-like"/>
    <property type="match status" value="1"/>
</dbReference>
<dbReference type="InterPro" id="IPR001356">
    <property type="entry name" value="HD"/>
</dbReference>
<dbReference type="InterPro" id="IPR050762">
    <property type="entry name" value="HD-ZIP_Homeobox_LZ_Class_II"/>
</dbReference>
<dbReference type="InterPro" id="IPR006712">
    <property type="entry name" value="HD-ZIP_N"/>
</dbReference>
<dbReference type="InterPro" id="IPR017970">
    <property type="entry name" value="Homeobox_CS"/>
</dbReference>
<dbReference type="InterPro" id="IPR009057">
    <property type="entry name" value="Homeodomain-like_sf"/>
</dbReference>
<dbReference type="InterPro" id="IPR000047">
    <property type="entry name" value="HTH_motif"/>
</dbReference>
<dbReference type="InterPro" id="IPR003106">
    <property type="entry name" value="Leu_zip_homeo"/>
</dbReference>
<dbReference type="PANTHER" id="PTHR45714:SF61">
    <property type="entry name" value="HOMEOBOX-LEUCINE ZIPPER PROTEIN HAT1"/>
    <property type="match status" value="1"/>
</dbReference>
<dbReference type="PANTHER" id="PTHR45714">
    <property type="entry name" value="HOMEOBOX-LEUCINE ZIPPER PROTEIN HAT14"/>
    <property type="match status" value="1"/>
</dbReference>
<dbReference type="Pfam" id="PF02183">
    <property type="entry name" value="HALZ"/>
    <property type="match status" value="1"/>
</dbReference>
<dbReference type="Pfam" id="PF04618">
    <property type="entry name" value="HD-ZIP_N"/>
    <property type="match status" value="1"/>
</dbReference>
<dbReference type="Pfam" id="PF00046">
    <property type="entry name" value="Homeodomain"/>
    <property type="match status" value="1"/>
</dbReference>
<dbReference type="PRINTS" id="PR00031">
    <property type="entry name" value="HTHREPRESSR"/>
</dbReference>
<dbReference type="SMART" id="SM00340">
    <property type="entry name" value="HALZ"/>
    <property type="match status" value="1"/>
</dbReference>
<dbReference type="SMART" id="SM00389">
    <property type="entry name" value="HOX"/>
    <property type="match status" value="1"/>
</dbReference>
<dbReference type="SUPFAM" id="SSF46689">
    <property type="entry name" value="Homeodomain-like"/>
    <property type="match status" value="1"/>
</dbReference>
<dbReference type="PROSITE" id="PS00027">
    <property type="entry name" value="HOMEOBOX_1"/>
    <property type="match status" value="1"/>
</dbReference>
<dbReference type="PROSITE" id="PS50071">
    <property type="entry name" value="HOMEOBOX_2"/>
    <property type="match status" value="1"/>
</dbReference>
<keyword id="KW-0238">DNA-binding</keyword>
<keyword id="KW-0371">Homeobox</keyword>
<keyword id="KW-0539">Nucleus</keyword>
<keyword id="KW-1185">Reference proteome</keyword>
<keyword id="KW-0804">Transcription</keyword>
<keyword id="KW-0805">Transcription regulation</keyword>
<proteinExistence type="evidence at protein level"/>
<comment type="function">
    <text evidence="1">Probable transcription factor.</text>
</comment>
<comment type="subunit">
    <text evidence="4">Interacts with BZIP30.</text>
</comment>
<comment type="interaction">
    <interactant intactId="EBI-15195911">
        <id>P46600</id>
    </interactant>
    <interactant intactId="EBI-15192259">
        <id>P92953</id>
        <label>ATHB-4</label>
    </interactant>
    <organismsDiffer>false</organismsDiffer>
    <experiments>4</experiments>
</comment>
<comment type="interaction">
    <interactant intactId="EBI-15195911">
        <id>P46600</id>
    </interactant>
    <interactant intactId="EBI-1536772">
        <id>O04292</id>
        <label>ATHB-9</label>
    </interactant>
    <organismsDiffer>false</organismsDiffer>
    <experiments>3</experiments>
</comment>
<comment type="interaction">
    <interactant intactId="EBI-15195911">
        <id>P46600</id>
    </interactant>
    <interactant intactId="EBI-3133795">
        <id>Q8GXM7</id>
        <label>ATHB-X</label>
    </interactant>
    <organismsDiffer>false</organismsDiffer>
    <experiments>5</experiments>
</comment>
<comment type="interaction">
    <interactant intactId="EBI-15195911">
        <id>P46600</id>
    </interactant>
    <interactant intactId="EBI-4450405">
        <id>P46602</id>
        <label>HAT3</label>
    </interactant>
    <organismsDiffer>false</organismsDiffer>
    <experiments>5</experiments>
</comment>
<comment type="interaction">
    <interactant intactId="EBI-15195911">
        <id>P46600</id>
    </interactant>
    <interactant intactId="EBI-4428728">
        <id>Q05466</id>
        <label>HAT4</label>
    </interactant>
    <organismsDiffer>false</organismsDiffer>
    <experiments>3</experiments>
</comment>
<comment type="interaction">
    <interactant intactId="EBI-15195911">
        <id>P46600</id>
    </interactant>
    <interactant intactId="EBI-15192157">
        <id>P46603</id>
        <label>HAT9</label>
    </interactant>
    <organismsDiffer>false</organismsDiffer>
    <experiments>4</experiments>
</comment>
<comment type="interaction">
    <interactant intactId="EBI-15195911">
        <id>P46600</id>
    </interactant>
    <interactant intactId="EBI-15192325">
        <id>Q8LPR5</id>
        <label>TCP4</label>
    </interactant>
    <organismsDiffer>false</organismsDiffer>
    <experiments>3</experiments>
</comment>
<comment type="subcellular location">
    <subcellularLocation>
        <location evidence="5">Nucleus</location>
    </subcellularLocation>
</comment>
<comment type="similarity">
    <text evidence="5">Belongs to the HD-ZIP homeobox family. Class II subfamily.</text>
</comment>
<accession>P46600</accession>
<accession>Q546G7</accession>
<accession>Q8LBA8</accession>